<organism>
    <name type="scientific">Saccharomyces cerevisiae (strain ATCC 204508 / S288c)</name>
    <name type="common">Baker's yeast</name>
    <dbReference type="NCBI Taxonomy" id="559292"/>
    <lineage>
        <taxon>Eukaryota</taxon>
        <taxon>Fungi</taxon>
        <taxon>Dikarya</taxon>
        <taxon>Ascomycota</taxon>
        <taxon>Saccharomycotina</taxon>
        <taxon>Saccharomycetes</taxon>
        <taxon>Saccharomycetales</taxon>
        <taxon>Saccharomycetaceae</taxon>
        <taxon>Saccharomyces</taxon>
    </lineage>
</organism>
<protein>
    <recommendedName>
        <fullName evidence="10">Nucleosome assembly protein</fullName>
    </recommendedName>
</protein>
<proteinExistence type="evidence at protein level"/>
<dbReference type="EMBL" id="M63555">
    <property type="protein sequence ID" value="AAA34811.1"/>
    <property type="molecule type" value="Genomic_DNA"/>
</dbReference>
<dbReference type="EMBL" id="AY692777">
    <property type="protein sequence ID" value="AAT92796.1"/>
    <property type="molecule type" value="Genomic_DNA"/>
</dbReference>
<dbReference type="EMBL" id="Z28272">
    <property type="protein sequence ID" value="CAA82124.2"/>
    <property type="molecule type" value="Genomic_DNA"/>
</dbReference>
<dbReference type="EMBL" id="Z28273">
    <property type="protein sequence ID" value="CAA82125.1"/>
    <property type="molecule type" value="Genomic_DNA"/>
</dbReference>
<dbReference type="EMBL" id="BK006944">
    <property type="protein sequence ID" value="DAA09199.1"/>
    <property type="molecule type" value="Genomic_DNA"/>
</dbReference>
<dbReference type="PIR" id="S38122">
    <property type="entry name" value="S38122"/>
</dbReference>
<dbReference type="RefSeq" id="NP_012974.1">
    <property type="nucleotide sequence ID" value="NM_001179838.1"/>
</dbReference>
<dbReference type="PDB" id="2AYU">
    <property type="method" value="X-ray"/>
    <property type="resolution" value="3.00 A"/>
    <property type="chains" value="A=1-417"/>
</dbReference>
<dbReference type="PDB" id="2Z2R">
    <property type="method" value="X-ray"/>
    <property type="resolution" value="3.20 A"/>
    <property type="chains" value="A/B=74-365"/>
</dbReference>
<dbReference type="PDB" id="5G2E">
    <property type="method" value="X-ray"/>
    <property type="resolution" value="6.70 A"/>
    <property type="chains" value="A/B/E/F/I/J/M/N/Q/R/U/V=74-372"/>
</dbReference>
<dbReference type="PDB" id="9B23">
    <property type="method" value="EM"/>
    <property type="resolution" value="3.20 A"/>
    <property type="chains" value="D/E=74-365"/>
</dbReference>
<dbReference type="PDB" id="9B31">
    <property type="method" value="EM"/>
    <property type="resolution" value="3.20 A"/>
    <property type="chains" value="D/E=74-365"/>
</dbReference>
<dbReference type="PDB" id="9B3F">
    <property type="method" value="EM"/>
    <property type="resolution" value="3.54 A"/>
    <property type="chains" value="D/E=74-365"/>
</dbReference>
<dbReference type="PDB" id="9B3I">
    <property type="method" value="EM"/>
    <property type="resolution" value="2.88 A"/>
    <property type="chains" value="E/F=3-417"/>
</dbReference>
<dbReference type="PDBsum" id="2AYU"/>
<dbReference type="PDBsum" id="2Z2R"/>
<dbReference type="PDBsum" id="5G2E"/>
<dbReference type="PDBsum" id="9B23"/>
<dbReference type="PDBsum" id="9B31"/>
<dbReference type="PDBsum" id="9B3F"/>
<dbReference type="PDBsum" id="9B3I"/>
<dbReference type="SMR" id="P25293"/>
<dbReference type="BioGRID" id="34179">
    <property type="interactions" value="493"/>
</dbReference>
<dbReference type="ComplexPortal" id="CPX-1712">
    <property type="entry name" value="Gin4 serine/threonine kinase complex"/>
</dbReference>
<dbReference type="DIP" id="DIP-1380N"/>
<dbReference type="FunCoup" id="P25293">
    <property type="interactions" value="2156"/>
</dbReference>
<dbReference type="IntAct" id="P25293">
    <property type="interactions" value="93"/>
</dbReference>
<dbReference type="MINT" id="P25293"/>
<dbReference type="STRING" id="4932.YKR048C"/>
<dbReference type="iPTMnet" id="P25293"/>
<dbReference type="PaxDb" id="4932-YKR048C"/>
<dbReference type="PeptideAtlas" id="P25293"/>
<dbReference type="EnsemblFungi" id="YKR048C_mRNA">
    <property type="protein sequence ID" value="YKR048C"/>
    <property type="gene ID" value="YKR048C"/>
</dbReference>
<dbReference type="GeneID" id="853922"/>
<dbReference type="KEGG" id="sce:YKR048C"/>
<dbReference type="AGR" id="SGD:S000001756"/>
<dbReference type="SGD" id="S000001756">
    <property type="gene designation" value="NAP1"/>
</dbReference>
<dbReference type="VEuPathDB" id="FungiDB:YKR048C"/>
<dbReference type="eggNOG" id="KOG1507">
    <property type="taxonomic scope" value="Eukaryota"/>
</dbReference>
<dbReference type="GeneTree" id="ENSGT00940000167738"/>
<dbReference type="HOGENOM" id="CLU_038841_1_0_1"/>
<dbReference type="InParanoid" id="P25293"/>
<dbReference type="OMA" id="AAECKQN"/>
<dbReference type="OrthoDB" id="27325at2759"/>
<dbReference type="BioCyc" id="YEAST:G3O-32018-MONOMER"/>
<dbReference type="BioGRID-ORCS" id="853922">
    <property type="hits" value="3 hits in 10 CRISPR screens"/>
</dbReference>
<dbReference type="EvolutionaryTrace" id="P25293"/>
<dbReference type="PRO" id="PR:P25293"/>
<dbReference type="Proteomes" id="UP000002311">
    <property type="component" value="Chromosome XI"/>
</dbReference>
<dbReference type="RNAct" id="P25293">
    <property type="molecule type" value="protein"/>
</dbReference>
<dbReference type="GO" id="GO:0032153">
    <property type="term" value="C:cell division site"/>
    <property type="evidence" value="ECO:0000314"/>
    <property type="project" value="SGD"/>
</dbReference>
<dbReference type="GO" id="GO:0032174">
    <property type="term" value="C:cellular bud neck septin collar"/>
    <property type="evidence" value="ECO:0000314"/>
    <property type="project" value="SGD"/>
</dbReference>
<dbReference type="GO" id="GO:0000785">
    <property type="term" value="C:chromatin"/>
    <property type="evidence" value="ECO:0000318"/>
    <property type="project" value="GO_Central"/>
</dbReference>
<dbReference type="GO" id="GO:0005737">
    <property type="term" value="C:cytoplasm"/>
    <property type="evidence" value="ECO:0000314"/>
    <property type="project" value="UniProtKB"/>
</dbReference>
<dbReference type="GO" id="GO:1990317">
    <property type="term" value="C:Gin4 complex"/>
    <property type="evidence" value="ECO:0000353"/>
    <property type="project" value="ComplexPortal"/>
</dbReference>
<dbReference type="GO" id="GO:0005634">
    <property type="term" value="C:nucleus"/>
    <property type="evidence" value="ECO:0000318"/>
    <property type="project" value="GO_Central"/>
</dbReference>
<dbReference type="GO" id="GO:0003682">
    <property type="term" value="F:chromatin binding"/>
    <property type="evidence" value="ECO:0000318"/>
    <property type="project" value="GO_Central"/>
</dbReference>
<dbReference type="GO" id="GO:0030332">
    <property type="term" value="F:cyclin binding"/>
    <property type="evidence" value="ECO:0000353"/>
    <property type="project" value="UniProtKB"/>
</dbReference>
<dbReference type="GO" id="GO:0003677">
    <property type="term" value="F:DNA binding"/>
    <property type="evidence" value="ECO:0007669"/>
    <property type="project" value="UniProtKB-KW"/>
</dbReference>
<dbReference type="GO" id="GO:0008047">
    <property type="term" value="F:enzyme activator activity"/>
    <property type="evidence" value="ECO:0000314"/>
    <property type="project" value="SGD"/>
</dbReference>
<dbReference type="GO" id="GO:0042393">
    <property type="term" value="F:histone binding"/>
    <property type="evidence" value="ECO:0000314"/>
    <property type="project" value="SGD"/>
</dbReference>
<dbReference type="GO" id="GO:0042802">
    <property type="term" value="F:identical protein binding"/>
    <property type="evidence" value="ECO:0000353"/>
    <property type="project" value="IntAct"/>
</dbReference>
<dbReference type="GO" id="GO:0051082">
    <property type="term" value="F:unfolded protein binding"/>
    <property type="evidence" value="ECO:0000314"/>
    <property type="project" value="SGD"/>
</dbReference>
<dbReference type="GO" id="GO:0007117">
    <property type="term" value="P:budding cell bud growth"/>
    <property type="evidence" value="ECO:0000315"/>
    <property type="project" value="SGD"/>
</dbReference>
<dbReference type="GO" id="GO:0006607">
    <property type="term" value="P:NLS-bearing protein import into nucleus"/>
    <property type="evidence" value="ECO:0000315"/>
    <property type="project" value="SGD"/>
</dbReference>
<dbReference type="GO" id="GO:0006334">
    <property type="term" value="P:nucleosome assembly"/>
    <property type="evidence" value="ECO:0000314"/>
    <property type="project" value="SGD"/>
</dbReference>
<dbReference type="GO" id="GO:0006337">
    <property type="term" value="P:nucleosome disassembly"/>
    <property type="evidence" value="ECO:0000314"/>
    <property type="project" value="SGD"/>
</dbReference>
<dbReference type="GO" id="GO:0031116">
    <property type="term" value="P:positive regulation of microtubule polymerization"/>
    <property type="evidence" value="ECO:0000315"/>
    <property type="project" value="SGD"/>
</dbReference>
<dbReference type="GO" id="GO:0032968">
    <property type="term" value="P:positive regulation of transcription elongation by RNA polymerase II"/>
    <property type="evidence" value="ECO:0000314"/>
    <property type="project" value="SGD"/>
</dbReference>
<dbReference type="GO" id="GO:0098841">
    <property type="term" value="P:protein localization to cell division site after cytokinesis"/>
    <property type="evidence" value="ECO:0000315"/>
    <property type="project" value="SGD"/>
</dbReference>
<dbReference type="GO" id="GO:0042274">
    <property type="term" value="P:ribosomal small subunit biogenesis"/>
    <property type="evidence" value="ECO:0000316"/>
    <property type="project" value="SGD"/>
</dbReference>
<dbReference type="GO" id="GO:0000921">
    <property type="term" value="P:septin ring assembly"/>
    <property type="evidence" value="ECO:0000303"/>
    <property type="project" value="ComplexPortal"/>
</dbReference>
<dbReference type="GO" id="GO:0000920">
    <property type="term" value="P:septum digestion after cytokinesis"/>
    <property type="evidence" value="ECO:0000303"/>
    <property type="project" value="ComplexPortal"/>
</dbReference>
<dbReference type="FunFam" id="3.30.1120.90:FF:000003">
    <property type="entry name" value="Nucleosome assembly protein"/>
    <property type="match status" value="1"/>
</dbReference>
<dbReference type="FunFam" id="1.20.5.1500:FF:000001">
    <property type="entry name" value="Nucleosome assembly protein 1-like 1"/>
    <property type="match status" value="1"/>
</dbReference>
<dbReference type="Gene3D" id="1.20.5.1500">
    <property type="match status" value="1"/>
</dbReference>
<dbReference type="Gene3D" id="3.30.1120.90">
    <property type="entry name" value="Nucleosome assembly protein"/>
    <property type="match status" value="1"/>
</dbReference>
<dbReference type="InterPro" id="IPR037231">
    <property type="entry name" value="NAP-like_sf"/>
</dbReference>
<dbReference type="InterPro" id="IPR002164">
    <property type="entry name" value="NAP_family"/>
</dbReference>
<dbReference type="PANTHER" id="PTHR11875">
    <property type="entry name" value="TESTIS-SPECIFIC Y-ENCODED PROTEIN"/>
    <property type="match status" value="1"/>
</dbReference>
<dbReference type="Pfam" id="PF00956">
    <property type="entry name" value="NAP"/>
    <property type="match status" value="1"/>
</dbReference>
<dbReference type="SUPFAM" id="SSF143113">
    <property type="entry name" value="NAP-like"/>
    <property type="match status" value="1"/>
</dbReference>
<reference key="1">
    <citation type="journal article" date="1991" name="J. Biol. Chem.">
        <title>Identification and molecular cloning of yeast homolog of nucleosome assembly protein I which facilitates nucleosome assembly in vitro.</title>
        <authorList>
            <person name="Ishimi Y."/>
            <person name="Kikuchi A."/>
        </authorList>
    </citation>
    <scope>NUCLEOTIDE SEQUENCE [GENOMIC DNA]</scope>
    <scope>FUNCTION</scope>
</reference>
<reference key="2">
    <citation type="journal article" date="1994" name="Nature">
        <title>Complete DNA sequence of yeast chromosome XI.</title>
        <authorList>
            <person name="Dujon B."/>
            <person name="Alexandraki D."/>
            <person name="Andre B."/>
            <person name="Ansorge W."/>
            <person name="Baladron V."/>
            <person name="Ballesta J.P.G."/>
            <person name="Banrevi A."/>
            <person name="Bolle P.-A."/>
            <person name="Bolotin-Fukuhara M."/>
            <person name="Bossier P."/>
            <person name="Bou G."/>
            <person name="Boyer J."/>
            <person name="Buitrago M.J."/>
            <person name="Cheret G."/>
            <person name="Colleaux L."/>
            <person name="Daignan-Fornier B."/>
            <person name="del Rey F."/>
            <person name="Dion C."/>
            <person name="Domdey H."/>
            <person name="Duesterhoeft A."/>
            <person name="Duesterhus S."/>
            <person name="Entian K.-D."/>
            <person name="Erfle H."/>
            <person name="Esteban P.F."/>
            <person name="Feldmann H."/>
            <person name="Fernandes L."/>
            <person name="Fobo G.M."/>
            <person name="Fritz C."/>
            <person name="Fukuhara H."/>
            <person name="Gabel C."/>
            <person name="Gaillon L."/>
            <person name="Garcia-Cantalejo J.M."/>
            <person name="Garcia-Ramirez J.J."/>
            <person name="Gent M.E."/>
            <person name="Ghazvini M."/>
            <person name="Goffeau A."/>
            <person name="Gonzalez A."/>
            <person name="Grothues D."/>
            <person name="Guerreiro P."/>
            <person name="Hegemann J.H."/>
            <person name="Hewitt N."/>
            <person name="Hilger F."/>
            <person name="Hollenberg C.P."/>
            <person name="Horaitis O."/>
            <person name="Indge K.J."/>
            <person name="Jacquier A."/>
            <person name="James C.M."/>
            <person name="Jauniaux J.-C."/>
            <person name="Jimenez A."/>
            <person name="Keuchel H."/>
            <person name="Kirchrath L."/>
            <person name="Kleine K."/>
            <person name="Koetter P."/>
            <person name="Legrain P."/>
            <person name="Liebl S."/>
            <person name="Louis E.J."/>
            <person name="Maia e Silva A."/>
            <person name="Marck C."/>
            <person name="Monnier A.-L."/>
            <person name="Moestl D."/>
            <person name="Mueller S."/>
            <person name="Obermaier B."/>
            <person name="Oliver S.G."/>
            <person name="Pallier C."/>
            <person name="Pascolo S."/>
            <person name="Pfeiffer F."/>
            <person name="Philippsen P."/>
            <person name="Planta R.J."/>
            <person name="Pohl F.M."/>
            <person name="Pohl T.M."/>
            <person name="Poehlmann R."/>
            <person name="Portetelle D."/>
            <person name="Purnelle B."/>
            <person name="Puzos V."/>
            <person name="Ramezani Rad M."/>
            <person name="Rasmussen S.W."/>
            <person name="Remacha M.A."/>
            <person name="Revuelta J.L."/>
            <person name="Richard G.-F."/>
            <person name="Rieger M."/>
            <person name="Rodrigues-Pousada C."/>
            <person name="Rose M."/>
            <person name="Rupp T."/>
            <person name="Santos M.A."/>
            <person name="Schwager C."/>
            <person name="Sensen C."/>
            <person name="Skala J."/>
            <person name="Soares H."/>
            <person name="Sor F."/>
            <person name="Stegemann J."/>
            <person name="Tettelin H."/>
            <person name="Thierry A."/>
            <person name="Tzermia M."/>
            <person name="Urrestarazu L.A."/>
            <person name="van Dyck L."/>
            <person name="van Vliet-Reedijk J.C."/>
            <person name="Valens M."/>
            <person name="Vandenbol M."/>
            <person name="Vilela C."/>
            <person name="Vissers S."/>
            <person name="von Wettstein D."/>
            <person name="Voss H."/>
            <person name="Wiemann S."/>
            <person name="Xu G."/>
            <person name="Zimmermann J."/>
            <person name="Haasemann M."/>
            <person name="Becker I."/>
            <person name="Mewes H.-W."/>
        </authorList>
    </citation>
    <scope>NUCLEOTIDE SEQUENCE [LARGE SCALE GENOMIC DNA]</scope>
    <source>
        <strain>ATCC 204508 / S288c</strain>
    </source>
</reference>
<reference key="3">
    <citation type="journal article" date="2014" name="G3 (Bethesda)">
        <title>The reference genome sequence of Saccharomyces cerevisiae: Then and now.</title>
        <authorList>
            <person name="Engel S.R."/>
            <person name="Dietrich F.S."/>
            <person name="Fisk D.G."/>
            <person name="Binkley G."/>
            <person name="Balakrishnan R."/>
            <person name="Costanzo M.C."/>
            <person name="Dwight S.S."/>
            <person name="Hitz B.C."/>
            <person name="Karra K."/>
            <person name="Nash R.S."/>
            <person name="Weng S."/>
            <person name="Wong E.D."/>
            <person name="Lloyd P."/>
            <person name="Skrzypek M.S."/>
            <person name="Miyasato S.R."/>
            <person name="Simison M."/>
            <person name="Cherry J.M."/>
        </authorList>
    </citation>
    <scope>GENOME REANNOTATION</scope>
    <source>
        <strain>ATCC 204508 / S288c</strain>
    </source>
</reference>
<reference key="4">
    <citation type="journal article" date="2007" name="Genome Res.">
        <title>Approaching a complete repository of sequence-verified protein-encoding clones for Saccharomyces cerevisiae.</title>
        <authorList>
            <person name="Hu Y."/>
            <person name="Rolfs A."/>
            <person name="Bhullar B."/>
            <person name="Murthy T.V.S."/>
            <person name="Zhu C."/>
            <person name="Berger M.F."/>
            <person name="Camargo A.A."/>
            <person name="Kelley F."/>
            <person name="McCarron S."/>
            <person name="Jepson D."/>
            <person name="Richardson A."/>
            <person name="Raphael J."/>
            <person name="Moreira D."/>
            <person name="Taycher E."/>
            <person name="Zuo D."/>
            <person name="Mohr S."/>
            <person name="Kane M.F."/>
            <person name="Williamson J."/>
            <person name="Simpson A.J.G."/>
            <person name="Bulyk M.L."/>
            <person name="Harlow E."/>
            <person name="Marsischky G."/>
            <person name="Kolodner R.D."/>
            <person name="LaBaer J."/>
        </authorList>
    </citation>
    <scope>NUCLEOTIDE SEQUENCE [GENOMIC DNA]</scope>
    <source>
        <strain>ATCC 204508 / S288c</strain>
    </source>
</reference>
<reference key="5">
    <citation type="journal article" date="1995" name="J. Cell Biol.">
        <title>Members of the NAP/SET family of proteins interact specifically with B-type cyclins.</title>
        <authorList>
            <person name="Kellogg D.R."/>
            <person name="Kikuchi A."/>
            <person name="Fujii-Nakata T."/>
            <person name="Turck C.W."/>
            <person name="Murray A.W."/>
        </authorList>
    </citation>
    <scope>PROTEIN SEQUENCE OF 251-256</scope>
    <scope>FUNCTION</scope>
    <scope>INTERACTION WITH CLB2</scope>
    <scope>SUBCELLULAR LOCATION</scope>
</reference>
<reference key="6">
    <citation type="journal article" date="2002" name="Mol. Biol. Cell">
        <title>Cell cycle-dependent assembly of a Gin4-septin complex.</title>
        <authorList>
            <person name="Mortensen E.M."/>
            <person name="McDonald H."/>
            <person name="Yates J. III"/>
            <person name="Kellogg D.R."/>
        </authorList>
    </citation>
    <scope>FUNCTION</scope>
    <scope>IDENTIFICATION BY MASS SPECTROMETRY</scope>
    <scope>IDENTIFICATION IN THE GIN4 COMPLEX</scope>
</reference>
<reference key="7">
    <citation type="journal article" date="2003" name="Nature">
        <title>Global analysis of protein localization in budding yeast.</title>
        <authorList>
            <person name="Huh W.-K."/>
            <person name="Falvo J.V."/>
            <person name="Gerke L.C."/>
            <person name="Carroll A.S."/>
            <person name="Howson R.W."/>
            <person name="Weissman J.S."/>
            <person name="O'Shea E.K."/>
        </authorList>
    </citation>
    <scope>SUBCELLULAR LOCATION [LARGE SCALE ANALYSIS]</scope>
</reference>
<reference key="8">
    <citation type="journal article" date="2003" name="Nature">
        <title>Global analysis of protein expression in yeast.</title>
        <authorList>
            <person name="Ghaemmaghami S."/>
            <person name="Huh W.-K."/>
            <person name="Bower K."/>
            <person name="Howson R.W."/>
            <person name="Belle A."/>
            <person name="Dephoure N."/>
            <person name="O'Shea E.K."/>
            <person name="Weissman J.S."/>
        </authorList>
    </citation>
    <scope>LEVEL OF PROTEIN EXPRESSION [LARGE SCALE ANALYSIS]</scope>
</reference>
<reference key="9">
    <citation type="journal article" date="2005" name="Mol. Cell. Proteomics">
        <title>Quantitative phosphoproteomics applied to the yeast pheromone signaling pathway.</title>
        <authorList>
            <person name="Gruhler A."/>
            <person name="Olsen J.V."/>
            <person name="Mohammed S."/>
            <person name="Mortensen P."/>
            <person name="Faergeman N.J."/>
            <person name="Mann M."/>
            <person name="Jensen O.N."/>
        </authorList>
    </citation>
    <scope>PHOSPHORYLATION [LARGE SCALE ANALYSIS] AT SER-76</scope>
    <scope>IDENTIFICATION BY MASS SPECTROMETRY [LARGE SCALE ANALYSIS]</scope>
    <source>
        <strain>YAL6B</strain>
    </source>
</reference>
<reference key="10">
    <citation type="journal article" date="2007" name="J. Proteome Res.">
        <title>Large-scale phosphorylation analysis of alpha-factor-arrested Saccharomyces cerevisiae.</title>
        <authorList>
            <person name="Li X."/>
            <person name="Gerber S.A."/>
            <person name="Rudner A.D."/>
            <person name="Beausoleil S.A."/>
            <person name="Haas W."/>
            <person name="Villen J."/>
            <person name="Elias J.E."/>
            <person name="Gygi S.P."/>
        </authorList>
    </citation>
    <scope>PHOSPHORYLATION [LARGE SCALE ANALYSIS] AT THR-20; THR-24; SER-27; SER-76 AND SER-177</scope>
    <scope>IDENTIFICATION BY MASS SPECTROMETRY [LARGE SCALE ANALYSIS]</scope>
    <source>
        <strain>ADR376</strain>
    </source>
</reference>
<reference key="11">
    <citation type="journal article" date="2008" name="Mol. Cell. Biol.">
        <title>Phosphorylation by casein kinase 2 regulates Nap1 localization and function.</title>
        <authorList>
            <person name="Calvert M.E.K."/>
            <person name="Keck K.M."/>
            <person name="Ptak C."/>
            <person name="Shabanowitz J."/>
            <person name="Hunt D.F."/>
            <person name="Pemberton L.F."/>
        </authorList>
    </citation>
    <scope>FUNCTION</scope>
    <scope>INTERACTION WITH RPL18A OR RPL18B; CKA2; CKI1; TEF1 OR TEF2; FOL1; HSC82; HTA2; HTB2; HTZ1; KAP114; KCC4; NIS1; SSA1; SSA2; SSB1; SSC1; SHM1; SIP5; TCO89 AND NBA1</scope>
    <scope>SUBCELLULAR LOCATION</scope>
    <scope>DISRUPTION PHENOTYPE</scope>
    <scope>PHOSPHORYLATION AT SER-82; SER-98; SER-104 AND SER-140</scope>
    <scope>PHOSPHORYLATION AT SER-159; SER-177 AND SER-397 BY CK2</scope>
    <scope>MUTAGENESIS OF LEU-99; SER-159; SER-177 AND SER-397</scope>
    <scope>IDENTIFICATION BY MASS SPECTROMETRY</scope>
</reference>
<reference key="12">
    <citation type="journal article" date="2008" name="Mol. Cell. Proteomics">
        <title>A multidimensional chromatography technology for in-depth phosphoproteome analysis.</title>
        <authorList>
            <person name="Albuquerque C.P."/>
            <person name="Smolka M.B."/>
            <person name="Payne S.H."/>
            <person name="Bafna V."/>
            <person name="Eng J."/>
            <person name="Zhou H."/>
        </authorList>
    </citation>
    <scope>PHOSPHORYLATION [LARGE SCALE ANALYSIS] AT THR-20; THR-24; SER-27; SER-76; SER-140 AND SER-177</scope>
    <scope>IDENTIFICATION BY MASS SPECTROMETRY [LARGE SCALE ANALYSIS]</scope>
</reference>
<reference key="13">
    <citation type="journal article" date="2009" name="Science">
        <title>Global analysis of Cdk1 substrate phosphorylation sites provides insights into evolution.</title>
        <authorList>
            <person name="Holt L.J."/>
            <person name="Tuch B.B."/>
            <person name="Villen J."/>
            <person name="Johnson A.D."/>
            <person name="Gygi S.P."/>
            <person name="Morgan D.O."/>
        </authorList>
    </citation>
    <scope>PHOSPHORYLATION [LARGE SCALE ANALYSIS] AT THR-20; THR-24; SER-27; THR-53; SER-69; SER-76; SER-82 AND SER-177</scope>
    <scope>IDENTIFICATION BY MASS SPECTROMETRY [LARGE SCALE ANALYSIS]</scope>
</reference>
<reference key="14">
    <citation type="journal article" date="2012" name="Proteomics">
        <title>Sites of ubiquitin attachment in Saccharomyces cerevisiae.</title>
        <authorList>
            <person name="Starita L.M."/>
            <person name="Lo R.S."/>
            <person name="Eng J.K."/>
            <person name="von Haller P.D."/>
            <person name="Fields S."/>
        </authorList>
    </citation>
    <scope>UBIQUITINATION [LARGE SCALE ANALYSIS] AT LYS-50</scope>
    <scope>IDENTIFICATION BY MASS SPECTROMETRY [LARGE SCALE ANALYSIS]</scope>
</reference>
<reference key="15">
    <citation type="journal article" date="2016" name="Nucleic Acids Res.">
        <title>The histone chaperone Vps75 forms multiple oligomeric assemblies capable of mediating exchange between histone H3-H4 tetramers and Asf1-H3-H4 complexes.</title>
        <authorList>
            <person name="Hammond C.M."/>
            <person name="Sundaramoorthy R."/>
            <person name="Larance M."/>
            <person name="Lamond A."/>
            <person name="Stevens M.A."/>
            <person name="El-Mkami H."/>
            <person name="Norman D.G."/>
            <person name="Owen-Hughes T."/>
        </authorList>
    </citation>
    <scope>INTERACTION WITH HISTONE H3/H4 HETERODIMERS</scope>
</reference>
<reference key="16">
    <citation type="journal article" date="2006" name="Proc. Natl. Acad. Sci. U.S.A.">
        <title>The structure of nucleosome assembly protein 1.</title>
        <authorList>
            <person name="Park Y.-J."/>
            <person name="Luger K."/>
        </authorList>
    </citation>
    <scope>X-RAY CRYSTALLOGRAPHY (3.0 ANGSTROMS)</scope>
    <scope>SUBUNIT</scope>
</reference>
<gene>
    <name evidence="10" type="primary">NAP1</name>
    <name evidence="12" type="ordered locus">YKR048C</name>
</gene>
<evidence type="ECO:0000255" key="1"/>
<evidence type="ECO:0000256" key="2">
    <source>
        <dbReference type="SAM" id="MobiDB-lite"/>
    </source>
</evidence>
<evidence type="ECO:0000269" key="3">
    <source>
    </source>
</evidence>
<evidence type="ECO:0000269" key="4">
    <source>
    </source>
</evidence>
<evidence type="ECO:0000269" key="5">
    <source>
    </source>
</evidence>
<evidence type="ECO:0000269" key="6">
    <source>
    </source>
</evidence>
<evidence type="ECO:0000269" key="7">
    <source>
    </source>
</evidence>
<evidence type="ECO:0000269" key="8">
    <source>
    </source>
</evidence>
<evidence type="ECO:0000269" key="9">
    <source>
    </source>
</evidence>
<evidence type="ECO:0000303" key="10">
    <source>
    </source>
</evidence>
<evidence type="ECO:0000305" key="11"/>
<evidence type="ECO:0000312" key="12">
    <source>
        <dbReference type="SGD" id="S000001756"/>
    </source>
</evidence>
<evidence type="ECO:0007744" key="13">
    <source>
    </source>
</evidence>
<evidence type="ECO:0007744" key="14">
    <source>
    </source>
</evidence>
<evidence type="ECO:0007744" key="15">
    <source>
    </source>
</evidence>
<evidence type="ECO:0007744" key="16">
    <source>
    </source>
</evidence>
<evidence type="ECO:0007744" key="17">
    <source>
    </source>
</evidence>
<evidence type="ECO:0007829" key="18">
    <source>
        <dbReference type="PDB" id="2AYU"/>
    </source>
</evidence>
<evidence type="ECO:0007829" key="19">
    <source>
        <dbReference type="PDB" id="9B3I"/>
    </source>
</evidence>
<feature type="chain" id="PRO_0000185659" description="Nucleosome assembly protein">
    <location>
        <begin position="1"/>
        <end position="417"/>
    </location>
</feature>
<feature type="DNA-binding region" description="H-T-H motif" evidence="1">
    <location>
        <begin position="330"/>
        <end position="356"/>
    </location>
</feature>
<feature type="region of interest" description="Disordered" evidence="2">
    <location>
        <begin position="1"/>
        <end position="47"/>
    </location>
</feature>
<feature type="region of interest" description="Interaction with NBA1" evidence="6">
    <location>
        <begin position="143"/>
        <end position="362"/>
    </location>
</feature>
<feature type="region of interest" description="Disordered" evidence="2">
    <location>
        <begin position="364"/>
        <end position="417"/>
    </location>
</feature>
<feature type="compositionally biased region" description="Polar residues" evidence="2">
    <location>
        <begin position="10"/>
        <end position="35"/>
    </location>
</feature>
<feature type="compositionally biased region" description="Acidic residues" evidence="2">
    <location>
        <begin position="367"/>
        <end position="403"/>
    </location>
</feature>
<feature type="compositionally biased region" description="Basic and acidic residues" evidence="2">
    <location>
        <begin position="404"/>
        <end position="417"/>
    </location>
</feature>
<feature type="modified residue" description="Phosphothreonine" evidence="14 15 16">
    <location>
        <position position="20"/>
    </location>
</feature>
<feature type="modified residue" description="Phosphothreonine" evidence="14 15 16">
    <location>
        <position position="24"/>
    </location>
</feature>
<feature type="modified residue" description="Phosphoserine" evidence="14 15 16">
    <location>
        <position position="27"/>
    </location>
</feature>
<feature type="modified residue" description="Phosphothreonine" evidence="16">
    <location>
        <position position="53"/>
    </location>
</feature>
<feature type="modified residue" description="Phosphoserine" evidence="16">
    <location>
        <position position="69"/>
    </location>
</feature>
<feature type="modified residue" description="Phosphoserine" evidence="13 14 15 16">
    <location>
        <position position="76"/>
    </location>
</feature>
<feature type="modified residue" description="Phosphoserine" evidence="6 16">
    <location>
        <position position="82"/>
    </location>
</feature>
<feature type="modified residue" description="Phosphoserine" evidence="6">
    <location>
        <position position="98"/>
    </location>
</feature>
<feature type="modified residue" description="Phosphoserine" evidence="6">
    <location>
        <position position="104"/>
    </location>
</feature>
<feature type="modified residue" description="Phosphoserine" evidence="6 15">
    <location>
        <position position="140"/>
    </location>
</feature>
<feature type="modified residue" description="Phosphoserine; by CK2" evidence="6">
    <location>
        <position position="159"/>
    </location>
</feature>
<feature type="modified residue" description="Phosphoserine; by CK2" evidence="6 14 15 16">
    <location>
        <position position="177"/>
    </location>
</feature>
<feature type="modified residue" description="Phosphoserine; by CK2" evidence="6">
    <location>
        <position position="397"/>
    </location>
</feature>
<feature type="cross-link" description="Glycyl lysine isopeptide (Lys-Gly) (interchain with G-Cter in ubiquitin)" evidence="17">
    <location>
        <position position="50"/>
    </location>
</feature>
<feature type="mutagenesis site" description="Predominantly cytoplasmic; when associated with A-159, A-177 and S-397." evidence="6">
    <original>L</original>
    <variation>S</variation>
    <location>
        <position position="99"/>
    </location>
</feature>
<feature type="mutagenesis site" description="Significant reduction in phosphorylation; when associated with A-397. Complete inhibition of phosphorylation; when associated with A-177 and A-397. Leads to a prolonged S phase and a shortened passage through G1; when associated with A-177 and A-397. Predominantly cytoplasmic; when associated with S-99, A-177 and A-397." evidence="6">
    <original>S</original>
    <variation>A</variation>
    <location>
        <position position="159"/>
    </location>
</feature>
<feature type="mutagenesis site" description="Leads to a prolonged S phase and a shortened passage through G1; when associated with A-177 and A-397." evidence="6">
    <original>S</original>
    <variation>D</variation>
    <location>
        <position position="159"/>
    </location>
</feature>
<feature type="mutagenesis site" description="Significant reduction in phosphorylation; when associated with A-397. Complete inhibition of phosphorylation; when associated with A-159 and A-397. Leads to a prolonged S phase and a shortened passage through G1; when associated with A-159 and A-397. Predominantly cytoplasmic; when associated with S-99, A-159 and A-397." evidence="6">
    <original>S</original>
    <variation>A</variation>
    <location>
        <position position="177"/>
    </location>
</feature>
<feature type="mutagenesis site" description="Leads to a prolonged S phase and a shortened passage through G1; when associated with A-159 and A-397." evidence="6">
    <original>S</original>
    <variation>D</variation>
    <location>
        <position position="177"/>
    </location>
</feature>
<feature type="mutagenesis site" description="Significant reduction in phosphorylation; when associated with either A-159 or A-177. Complete inhibition of phosphorylation; when associated with A-159 and A-177. Leads to a prolonged S phase and a shortened passage through G1; when associated with A-159 and A-177. Predominantly cytoplasmic; when associated with S-99; A-159 and A-177." evidence="6">
    <original>S</original>
    <variation>A</variation>
    <location>
        <position position="397"/>
    </location>
</feature>
<feature type="mutagenesis site" description="Leads to a prolonged S phase and a shortened passage through G1; when associated with A-159 and A-177." evidence="6">
    <original>S</original>
    <variation>D</variation>
    <location>
        <position position="397"/>
    </location>
</feature>
<feature type="sequence conflict" description="In Ref. 1; AAA34811." evidence="11" ref="1">
    <original>S</original>
    <variation>T</variation>
    <location>
        <position position="2"/>
    </location>
</feature>
<feature type="sequence conflict" description="In Ref. 1; AAA34811." evidence="11" ref="1">
    <original>QS</original>
    <variation>LC</variation>
    <location>
        <begin position="103"/>
        <end position="104"/>
    </location>
</feature>
<feature type="sequence conflict" description="In Ref. 1; AAA34811." evidence="11" ref="1">
    <original>RI</original>
    <variation>TM</variation>
    <location>
        <begin position="137"/>
        <end position="138"/>
    </location>
</feature>
<feature type="sequence conflict" description="In Ref. 1; AAA34811." evidence="11" ref="1">
    <original>E</original>
    <variation>D</variation>
    <location>
        <position position="384"/>
    </location>
</feature>
<feature type="turn" evidence="18">
    <location>
        <begin position="73"/>
        <end position="75"/>
    </location>
</feature>
<feature type="helix" evidence="19">
    <location>
        <begin position="84"/>
        <end position="87"/>
    </location>
</feature>
<feature type="helix" evidence="19">
    <location>
        <begin position="90"/>
        <end position="139"/>
    </location>
</feature>
<feature type="strand" evidence="18">
    <location>
        <begin position="141"/>
        <end position="143"/>
    </location>
</feature>
<feature type="helix" evidence="19">
    <location>
        <begin position="147"/>
        <end position="160"/>
    </location>
</feature>
<feature type="helix" evidence="19">
    <location>
        <begin position="163"/>
        <end position="165"/>
    </location>
</feature>
<feature type="helix" evidence="19">
    <location>
        <begin position="169"/>
        <end position="172"/>
    </location>
</feature>
<feature type="helix" evidence="19">
    <location>
        <begin position="176"/>
        <end position="179"/>
    </location>
</feature>
<feature type="helix" evidence="19">
    <location>
        <begin position="188"/>
        <end position="195"/>
    </location>
</feature>
<feature type="helix" evidence="19">
    <location>
        <begin position="199"/>
        <end position="202"/>
    </location>
</feature>
<feature type="helix" evidence="19">
    <location>
        <begin position="205"/>
        <end position="211"/>
    </location>
</feature>
<feature type="strand" evidence="19">
    <location>
        <begin position="214"/>
        <end position="222"/>
    </location>
</feature>
<feature type="strand" evidence="19">
    <location>
        <begin position="224"/>
        <end position="226"/>
    </location>
</feature>
<feature type="strand" evidence="19">
    <location>
        <begin position="228"/>
        <end position="235"/>
    </location>
</feature>
<feature type="turn" evidence="19">
    <location>
        <begin position="237"/>
        <end position="239"/>
    </location>
</feature>
<feature type="strand" evidence="19">
    <location>
        <begin position="241"/>
        <end position="243"/>
    </location>
</feature>
<feature type="strand" evidence="19">
    <location>
        <begin position="246"/>
        <end position="254"/>
    </location>
</feature>
<feature type="helix" evidence="19">
    <location>
        <begin position="260"/>
        <end position="262"/>
    </location>
</feature>
<feature type="strand" evidence="19">
    <location>
        <begin position="266"/>
        <end position="271"/>
    </location>
</feature>
<feature type="turn" evidence="19">
    <location>
        <begin position="279"/>
        <end position="281"/>
    </location>
</feature>
<feature type="strand" evidence="19">
    <location>
        <begin position="285"/>
        <end position="293"/>
    </location>
</feature>
<feature type="turn" evidence="19">
    <location>
        <begin position="295"/>
        <end position="297"/>
    </location>
</feature>
<feature type="strand" evidence="19">
    <location>
        <begin position="300"/>
        <end position="308"/>
    </location>
</feature>
<feature type="helix" evidence="19">
    <location>
        <begin position="312"/>
        <end position="315"/>
    </location>
</feature>
<feature type="helix" evidence="19">
    <location>
        <begin position="325"/>
        <end position="327"/>
    </location>
</feature>
<feature type="helix" evidence="19">
    <location>
        <begin position="328"/>
        <end position="350"/>
    </location>
</feature>
<feature type="turn" evidence="19">
    <location>
        <begin position="351"/>
        <end position="354"/>
    </location>
</feature>
<feature type="helix" evidence="19">
    <location>
        <begin position="357"/>
        <end position="361"/>
    </location>
</feature>
<feature type="turn" evidence="19">
    <location>
        <begin position="362"/>
        <end position="364"/>
    </location>
</feature>
<keyword id="KW-0002">3D-structure</keyword>
<keyword id="KW-0963">Cytoplasm</keyword>
<keyword id="KW-0903">Direct protein sequencing</keyword>
<keyword id="KW-0238">DNA-binding</keyword>
<keyword id="KW-1017">Isopeptide bond</keyword>
<keyword id="KW-0539">Nucleus</keyword>
<keyword id="KW-0597">Phosphoprotein</keyword>
<keyword id="KW-1185">Reference proteome</keyword>
<keyword id="KW-0832">Ubl conjugation</keyword>
<sequence>MSDPIRTKPKSSMQIDNAPTPHNTPASVLNPSYLKNGNPVRAQAQEQDDKIGTINEEDILANQPLLLQSIQDRLGSLVGQDSGYVGGLPKNVKEKLLSLKTLQSELFEVEKEFQVEMFELENKFLQKYKPIWEQRSRIISGQEQPKPEQIAKGQEIVESLNETELLVDEEEKAQNDSEEEQVKGIPSFWLTALENLPIVCDTITDRDAEVLEYLQDIGLEYLTDGRPGFKLLFRFDSSANPFFTNDILCKTYFYQKELGYSGDFIYDHAEGCEISWKDNAHNVTVDLEMRKQRNKTTKQVRTIEKITPIESFFNFFDPPKIQNEDQDEELEEDLEERLALDYSIGEQLKDKLIPRAVDWFTGAALEFEFEEDEEEADEDEDEEEDDDHGLEDDDGESAEEQDDFAGRPEQAPECKQS</sequence>
<name>NAP1_YEAST</name>
<accession>P25293</accession>
<accession>D6VXA9</accession>
<accession>P87196</accession>
<comment type="function">
    <text evidence="3 6 7 9">Acidic protein, which assembles histones into an octamer (in vitro). Involved in the regulation of the localization and the function of the septins during mitosis. Involved in the function of B-type cyclins.</text>
</comment>
<comment type="subunit">
    <text evidence="3 5 6 8 9">Component of the GIN4 complex composed of at least BNI5, CDC3, CDC10, CDC11, CDC12, GIN4, NAP1 and SHS1 which forms a ring at the bud neck (PubMed:12058072). Homodimer (in-vitro) (PubMed:16432217). Interacts with the B-type cyclin CLB2 (PubMed:7622566). Interacts with 60S ribosomal protein L18 (RPL18A or RPL18B), CKA2, CKI1, eukaryotic elongation factor 1 complex eEF1A (TEF1 or TEF2), FOL1, HSC82, HTA2, HTB2, HTZ1, KAP114, KCC4, NIS1, SSA1, SSA2, SSB1, SSC1, SHM1, SIP5 and TCO89 (PubMed:18086883). Interacts with NBA1 (PubMed:18086883). Interacts with histone H3/H4 heterodimers (PubMed:27036862).</text>
</comment>
<comment type="interaction">
    <interactant intactId="EBI-11850">
        <id>P25293</id>
    </interactant>
    <interactant intactId="EBI-29423">
        <id>Q99299</id>
        <label>AIM44</label>
    </interactant>
    <organismsDiffer>false</organismsDiffer>
    <experiments>5</experiments>
</comment>
<comment type="interaction">
    <interactant intactId="EBI-11850">
        <id>P25293</id>
    </interactant>
    <interactant intactId="EBI-9699">
        <id>P20485</id>
        <label>CKI1</label>
    </interactant>
    <organismsDiffer>false</organismsDiffer>
    <experiments>5</experiments>
</comment>
<comment type="interaction">
    <interactant intactId="EBI-11850">
        <id>P25293</id>
    </interactant>
    <interactant intactId="EBI-7595">
        <id>Q12263</id>
        <label>GIN4</label>
    </interactant>
    <organismsDiffer>false</organismsDiffer>
    <experiments>12</experiments>
</comment>
<comment type="interaction">
    <interactant intactId="EBI-11850">
        <id>P25293</id>
    </interactant>
    <interactant intactId="EBI-8072">
        <id>P04911</id>
        <label>HTA1</label>
    </interactant>
    <organismsDiffer>false</organismsDiffer>
    <experiments>3</experiments>
</comment>
<comment type="interaction">
    <interactant intactId="EBI-11850">
        <id>P25293</id>
    </interactant>
    <interactant intactId="EBI-9174">
        <id>P53067</id>
        <label>KAP114</label>
    </interactant>
    <organismsDiffer>false</organismsDiffer>
    <experiments>2</experiments>
</comment>
<comment type="interaction">
    <interactant intactId="EBI-11850">
        <id>P25293</id>
    </interactant>
    <interactant intactId="EBI-9607">
        <id>P25389</id>
        <label>KCC4</label>
    </interactant>
    <organismsDiffer>false</organismsDiffer>
    <experiments>6</experiments>
</comment>
<comment type="interaction">
    <interactant intactId="EBI-11850">
        <id>P25293</id>
    </interactant>
    <interactant intactId="EBI-11850">
        <id>P25293</id>
        <label>NAP1</label>
    </interactant>
    <organismsDiffer>false</organismsDiffer>
    <experiments>4</experiments>
</comment>
<comment type="interaction">
    <interactant intactId="EBI-11850">
        <id>P25293</id>
    </interactant>
    <interactant intactId="EBI-28760">
        <id>P53939</id>
        <label>NIS1</label>
    </interactant>
    <organismsDiffer>false</organismsDiffer>
    <experiments>6</experiments>
</comment>
<comment type="interaction">
    <interactant intactId="EBI-11850">
        <id>P25293</id>
    </interactant>
    <interactant intactId="EBI-21136">
        <id>P38344</id>
        <label>REI1</label>
    </interactant>
    <organismsDiffer>false</organismsDiffer>
    <experiments>3</experiments>
</comment>
<comment type="interaction">
    <interactant intactId="EBI-11850">
        <id>P25293</id>
    </interactant>
    <interactant intactId="EBI-10642">
        <id>P38615</id>
        <label>RIM11</label>
    </interactant>
    <organismsDiffer>false</organismsDiffer>
    <experiments>8</experiments>
</comment>
<comment type="interaction">
    <interactant intactId="EBI-11850">
        <id>P25293</id>
    </interactant>
    <interactant intactId="EBI-2887026">
        <id>Q07794</id>
        <label>RTT109</label>
    </interactant>
    <organismsDiffer>false</organismsDiffer>
    <experiments>2</experiments>
</comment>
<comment type="interaction">
    <interactant intactId="EBI-11850">
        <id>P25293</id>
    </interactant>
    <interactant intactId="EBI-37395">
        <id>Q08921</id>
        <label>TCO89</label>
    </interactant>
    <organismsDiffer>false</organismsDiffer>
    <experiments>3</experiments>
</comment>
<comment type="interaction">
    <interactant intactId="EBI-11850">
        <id>P25293</id>
    </interactant>
    <interactant intactId="EBI-37557">
        <id>Q12152</id>
        <label>YPL150W</label>
    </interactant>
    <organismsDiffer>false</organismsDiffer>
    <experiments>3</experiments>
</comment>
<comment type="subcellular location">
    <subcellularLocation>
        <location>Cytoplasm</location>
    </subcellularLocation>
    <subcellularLocation>
        <location>Nucleus</location>
    </subcellularLocation>
    <subcellularLocation>
        <location>Bud neck</location>
    </subcellularLocation>
    <text>Phosphorylation by CK2 promotes the import into the nucleus.</text>
</comment>
<comment type="domain">
    <text evidence="5">The acidic domains are probably involved in the interaction with histones.</text>
</comment>
<comment type="PTM">
    <text evidence="6">Phosphorylation by CK2 is required for normal progression through S phase. CK2 phosphorylation is not required for correct bud formation nor histone binding.</text>
</comment>
<comment type="disruption phenotype">
    <text evidence="6">Exhibits a large proportion of multinucleate cells. Elongated buds. The percentage of elongated buds is significantly increased when GIN4 or CKI1 is also deleted. Small decrease in the percentage of cells with elongated buds is observed in NAP1 and CKA2 double mutant. NAP1 and CKI1 double mutant exhibits increased sensitivity to benomyl. Increased resistance to benomyl in NAP1 and CKA2 double mutant.</text>
</comment>
<comment type="miscellaneous">
    <text evidence="4">Present with 8070 molecules/cell in log phase SD medium.</text>
</comment>
<comment type="similarity">
    <text evidence="11">Belongs to the nucleosome assembly protein (NAP) family.</text>
</comment>
<comment type="caution">
    <text evidence="11">NAP-I was previously referred to as AP-I.</text>
</comment>